<protein>
    <recommendedName>
        <fullName evidence="1">Triplex capsid protein 1</fullName>
    </recommendedName>
</protein>
<comment type="function">
    <text evidence="1 2">Structural component of the T=16 icosahedral capsid. The capsid is composed of pentamers and hexamers of major capsid protein/MCP, which are linked together by heterotrimers called triplexes. These triplexes are formed by a single molecule of triplex protein 1/TRX1 and two copies of triplex protein 2/TRX2. Additionally, TRX1 is required for efficient transport of TRX2 to the nucleus, which is the site of capsid assembly (By similarity). Also prevents necroptosis and extrinsic apoptosis by sequestering host ZBP1 into large, insoluble supercomplexes and impairing its ability to interact with RIPK3 (PubMed:32649716).</text>
</comment>
<comment type="subunit">
    <text evidence="1 2">Interacts with TRX2, MCP and capsid vertex component 2/CVC2 (By similarity). Self-assembles into homo-oligomeric amyloid fibrils (PubMed:32649716). Interacts with host ZBP1; this interaction prevents host necroptosis and extrinsic apoptosis (PubMed:32649716). Interacts with host RIPK3 (PubMed:32649716).</text>
</comment>
<comment type="subcellular location">
    <subcellularLocation>
        <location evidence="1">Virion</location>
    </subcellularLocation>
    <subcellularLocation>
        <location evidence="1">Host nucleus</location>
    </subcellularLocation>
</comment>
<comment type="similarity">
    <text evidence="1">Belongs to the herpesviridae TRX1 protein family.</text>
</comment>
<sequence length="483" mass="53971">MGSQPTNSHFTLNEQTLCGTNISLLGNNRFIQIGNGLHMTYAPGFFGNWSRDLTIGPRFGGLNKQPIHVPPKRTETASIQVTPRSIVINRMNNIQINPTSIGNPQVTIRLPLNNFKSTTQLIQQVSLTDFFRPDIEHAGSIVLILRHPSDMIGEANTLTQAGRDPDVLLEGLRNLFNACTAPWTVGEGGGLRAYVTSLSFIAACRAEEYTDKQAADANRTAIVSAYGCSRMETRLIRFSECLRAMVQCHVFPHRFISFFGSLLEYTIQDNLCNITAVAKGPQEAARTDKTSTRRVTANIPACVFWDVDKDLHLSADGLKHVFLVFVYTQRRQREGVRLHLALSQLNEQCFGRGIGFLLGRIRAENAAWGTEGVANTHQPYNTRALPLVQLSNDPTSPRCSIGEITGVNWNLARQRLYQWTGDFRGLPTQLSCMYAAYTLIGTIPSESVRYTRRMERFGGYNVPTIWLEGVVWGGTNTWNECYY</sequence>
<organism>
    <name type="scientific">Varicella-zoster virus (strain Dumas)</name>
    <name type="common">HHV-3</name>
    <name type="synonym">Human herpesvirus 3</name>
    <dbReference type="NCBI Taxonomy" id="10338"/>
    <lineage>
        <taxon>Viruses</taxon>
        <taxon>Duplodnaviria</taxon>
        <taxon>Heunggongvirae</taxon>
        <taxon>Peploviricota</taxon>
        <taxon>Herviviricetes</taxon>
        <taxon>Herpesvirales</taxon>
        <taxon>Orthoherpesviridae</taxon>
        <taxon>Alphaherpesvirinae</taxon>
        <taxon>Varicellovirus</taxon>
        <taxon>Varicellovirus humanalpha3</taxon>
        <taxon>Human herpesvirus 3</taxon>
    </lineage>
</organism>
<evidence type="ECO:0000255" key="1">
    <source>
        <dbReference type="HAMAP-Rule" id="MF_04018"/>
    </source>
</evidence>
<evidence type="ECO:0000269" key="2">
    <source>
    </source>
</evidence>
<gene>
    <name evidence="1" type="primary">TRX1</name>
    <name type="ordered locus">20</name>
</gene>
<organismHost>
    <name type="scientific">Homo sapiens</name>
    <name type="common">Human</name>
    <dbReference type="NCBI Taxonomy" id="9606"/>
</organismHost>
<name>TRX1_VZVD</name>
<dbReference type="EMBL" id="X04370">
    <property type="protein sequence ID" value="CAA27903.1"/>
    <property type="molecule type" value="Genomic_DNA"/>
</dbReference>
<dbReference type="PIR" id="B27343">
    <property type="entry name" value="WZBE20"/>
</dbReference>
<dbReference type="PDB" id="8XA0">
    <property type="method" value="EM"/>
    <property type="resolution" value="4.00 A"/>
    <property type="chains" value="Z=115-481"/>
</dbReference>
<dbReference type="PDB" id="8XA2">
    <property type="method" value="EM"/>
    <property type="resolution" value="4.00 A"/>
    <property type="chains" value="Z=115-481"/>
</dbReference>
<dbReference type="PDBsum" id="8XA0"/>
<dbReference type="PDBsum" id="8XA2"/>
<dbReference type="SMR" id="P09276"/>
<dbReference type="Proteomes" id="UP000002602">
    <property type="component" value="Genome"/>
</dbReference>
<dbReference type="GO" id="GO:0042025">
    <property type="term" value="C:host cell nucleus"/>
    <property type="evidence" value="ECO:0007669"/>
    <property type="project" value="UniProtKB-SubCell"/>
</dbReference>
<dbReference type="GO" id="GO:0019028">
    <property type="term" value="C:viral capsid"/>
    <property type="evidence" value="ECO:0007669"/>
    <property type="project" value="UniProtKB-KW"/>
</dbReference>
<dbReference type="GO" id="GO:0003677">
    <property type="term" value="F:DNA binding"/>
    <property type="evidence" value="ECO:0007669"/>
    <property type="project" value="InterPro"/>
</dbReference>
<dbReference type="GO" id="GO:0033668">
    <property type="term" value="P:symbiont-mediated suppression of host apoptosis"/>
    <property type="evidence" value="ECO:0007669"/>
    <property type="project" value="UniProtKB-KW"/>
</dbReference>
<dbReference type="GO" id="GO:0019069">
    <property type="term" value="P:viral capsid assembly"/>
    <property type="evidence" value="ECO:0007669"/>
    <property type="project" value="InterPro"/>
</dbReference>
<dbReference type="HAMAP" id="MF_04018">
    <property type="entry name" value="HSV_TRX1"/>
    <property type="match status" value="1"/>
</dbReference>
<dbReference type="InterPro" id="IPR004999">
    <property type="entry name" value="Herpes_1"/>
</dbReference>
<dbReference type="Pfam" id="PF03327">
    <property type="entry name" value="Herpes_VP19C"/>
    <property type="match status" value="1"/>
</dbReference>
<feature type="chain" id="PRO_0000115721" description="Triplex capsid protein 1">
    <location>
        <begin position="1"/>
        <end position="483"/>
    </location>
</feature>
<feature type="short sequence motif" description="RIP homotypic interaction motif (RHIM)" evidence="2">
    <location>
        <begin position="24"/>
        <end position="40"/>
    </location>
</feature>
<feature type="mutagenesis site" description="Loss of ability to form a regular, extended fibrillar structure." evidence="2">
    <original>IQIG</original>
    <variation>AAAA</variation>
    <location>
        <begin position="31"/>
        <end position="34"/>
    </location>
</feature>
<reference key="1">
    <citation type="journal article" date="1986" name="J. Gen. Virol.">
        <title>The complete DNA sequence of varicella-zoster virus.</title>
        <authorList>
            <person name="Davison A.J."/>
            <person name="Scott J.E."/>
        </authorList>
    </citation>
    <scope>NUCLEOTIDE SEQUENCE [LARGE SCALE GENOMIC DNA]</scope>
</reference>
<reference key="2">
    <citation type="journal article" date="2020" name="PLoS Pathog.">
        <title>Varicella zoster virus encodes a viral decoy RHIM to inhibit cell death.</title>
        <authorList>
            <person name="Steain M."/>
            <person name="Baker M.O.D.G."/>
            <person name="Pham C.L.L."/>
            <person name="Shanmugam N."/>
            <person name="Gambin Y."/>
            <person name="Sierecki E."/>
            <person name="McSharry B.P."/>
            <person name="Avdic S."/>
            <person name="Slobedman B."/>
            <person name="Sunde M."/>
            <person name="Abendroth A."/>
        </authorList>
    </citation>
    <scope>FUNCTION</scope>
    <scope>INTERACTION WITH HOST ZBP1 AND RIPK3</scope>
    <scope>MUTAGENESIS OF 31-ILE--GLY-34</scope>
</reference>
<keyword id="KW-0002">3D-structure</keyword>
<keyword id="KW-0167">Capsid protein</keyword>
<keyword id="KW-1048">Host nucleus</keyword>
<keyword id="KW-0945">Host-virus interaction</keyword>
<keyword id="KW-1085">Inhibition of host caspases by virus</keyword>
<keyword id="KW-1119">Modulation of host cell apoptosis by virus</keyword>
<keyword id="KW-1185">Reference proteome</keyword>
<keyword id="KW-0946">Virion</keyword>
<accession>P09276</accession>
<proteinExistence type="evidence at protein level"/>